<organism>
    <name type="scientific">Trieres chinensis</name>
    <name type="common">Marine centric diatom</name>
    <name type="synonym">Odontella sinensis</name>
    <dbReference type="NCBI Taxonomy" id="1514140"/>
    <lineage>
        <taxon>Eukaryota</taxon>
        <taxon>Sar</taxon>
        <taxon>Stramenopiles</taxon>
        <taxon>Ochrophyta</taxon>
        <taxon>Bacillariophyta</taxon>
        <taxon>Mediophyceae</taxon>
        <taxon>Biddulphiophycidae</taxon>
        <taxon>Eupodiscales</taxon>
        <taxon>Parodontellaceae</taxon>
        <taxon>Trieres</taxon>
    </lineage>
</organism>
<dbReference type="EMBL" id="Z67753">
    <property type="protein sequence ID" value="CAA91652.1"/>
    <property type="molecule type" value="Genomic_DNA"/>
</dbReference>
<dbReference type="PIR" id="S78279">
    <property type="entry name" value="S78279"/>
</dbReference>
<dbReference type="SMR" id="P49508"/>
<dbReference type="GO" id="GO:0009535">
    <property type="term" value="C:chloroplast thylakoid membrane"/>
    <property type="evidence" value="ECO:0007669"/>
    <property type="project" value="UniProtKB-SubCell"/>
</dbReference>
<dbReference type="GO" id="GO:0009523">
    <property type="term" value="C:photosystem II"/>
    <property type="evidence" value="ECO:0007669"/>
    <property type="project" value="UniProtKB-KW"/>
</dbReference>
<dbReference type="GO" id="GO:0015979">
    <property type="term" value="P:photosynthesis"/>
    <property type="evidence" value="ECO:0007669"/>
    <property type="project" value="UniProtKB-UniRule"/>
</dbReference>
<dbReference type="FunFam" id="2.40.30.220:FF:000001">
    <property type="entry name" value="Photosystem II reaction center Psb28 protein"/>
    <property type="match status" value="1"/>
</dbReference>
<dbReference type="Gene3D" id="2.40.30.220">
    <property type="entry name" value="Photosystem II Psb28"/>
    <property type="match status" value="1"/>
</dbReference>
<dbReference type="HAMAP" id="MF_01370">
    <property type="entry name" value="PSII_Psb28"/>
    <property type="match status" value="1"/>
</dbReference>
<dbReference type="InterPro" id="IPR038676">
    <property type="entry name" value="Psb28_c1_sf"/>
</dbReference>
<dbReference type="InterPro" id="IPR005610">
    <property type="entry name" value="PSII_Psb28_class-1"/>
</dbReference>
<dbReference type="NCBIfam" id="TIGR03047">
    <property type="entry name" value="PS_II_psb28"/>
    <property type="match status" value="1"/>
</dbReference>
<dbReference type="PANTHER" id="PTHR34963">
    <property type="match status" value="1"/>
</dbReference>
<dbReference type="PANTHER" id="PTHR34963:SF2">
    <property type="entry name" value="PHOTOSYSTEM II REACTION CENTER PSB28 PROTEIN, CHLOROPLASTIC"/>
    <property type="match status" value="1"/>
</dbReference>
<dbReference type="Pfam" id="PF03912">
    <property type="entry name" value="Psb28"/>
    <property type="match status" value="1"/>
</dbReference>
<gene>
    <name evidence="1" type="primary">psb28</name>
    <name evidence="1" type="synonym">psbW</name>
    <name type="synonym">ycf79</name>
</gene>
<name>PSB28_TRICV</name>
<keyword id="KW-0150">Chloroplast</keyword>
<keyword id="KW-0472">Membrane</keyword>
<keyword id="KW-0602">Photosynthesis</keyword>
<keyword id="KW-0604">Photosystem II</keyword>
<keyword id="KW-0934">Plastid</keyword>
<keyword id="KW-0793">Thylakoid</keyword>
<proteinExistence type="inferred from homology"/>
<protein>
    <recommendedName>
        <fullName evidence="1">Photosystem II reaction center Psb28 protein</fullName>
    </recommendedName>
    <alternativeName>
        <fullName evidence="1">Photosystem II 13 kDa protein</fullName>
    </alternativeName>
    <alternativeName>
        <fullName evidence="1">Photosystem II reaction center W protein</fullName>
    </alternativeName>
</protein>
<reference key="1">
    <citation type="journal article" date="1995" name="Plant Mol. Biol. Rep.">
        <title>The chloroplast genome of a chlorophyll a+c-containing alga, Odontella sinensis.</title>
        <authorList>
            <person name="Kowallik K.V."/>
            <person name="Stoebe B."/>
            <person name="Schaffran I."/>
            <person name="Kroth-Pancic P."/>
            <person name="Freier U."/>
        </authorList>
    </citation>
    <scope>NUCLEOTIDE SEQUENCE [LARGE SCALE GENOMIC DNA]</scope>
</reference>
<accession>P49508</accession>
<comment type="subunit">
    <text evidence="1">Part of the photosystem II complex.</text>
</comment>
<comment type="subcellular location">
    <subcellularLocation>
        <location evidence="1">Plastid</location>
        <location evidence="1">Chloroplast thylakoid membrane</location>
        <topology evidence="1">Peripheral membrane protein</topology>
        <orientation evidence="1">Stromal side</orientation>
    </subcellularLocation>
</comment>
<comment type="similarity">
    <text evidence="1">Belongs to the Psb28 family.</text>
</comment>
<geneLocation type="chloroplast"/>
<evidence type="ECO:0000255" key="1">
    <source>
        <dbReference type="HAMAP-Rule" id="MF_01370"/>
    </source>
</evidence>
<sequence length="115" mass="13090">MEAKIQFIKGLDEKVLPDVRLTRSRDGSTGTATFRFKNPNILDKSTAKEGEITGMYLIDQEGTLETRDVNAQFINGKPEAIESIYIMKSPEAWDRFMRFMERYGESNGLVFTKAS</sequence>
<feature type="chain" id="PRO_0000217283" description="Photosystem II reaction center Psb28 protein">
    <location>
        <begin position="1"/>
        <end position="115"/>
    </location>
</feature>